<sequence>MSKVIGIDLGTTNSCVAVLEGGEPKVIPNPEGARTTPSVVAFKNGERQVGEVAKRQSITNPNTIMSIKRHMGTDYTVEIEGKKYTPQEVSAIILQHLKSYAESYLGETVSKAVITVPAYFNDAERQATKDAGKIAGLEVERIINEPTAAALAYGLDKTEEDQTILVYDLGGGTFDVSILELGDGVFEVRSTAGDNRLGGDDFDQVIIDHLVSEFKKENGIDLSKDKMALQRLKDAAEKAKKDLSGVSSTQISLPFITAGEAGPLHLELTLTRAKFEELSSHLVERTMGPVRQALQDAGLSASEIDKVILVGGSTRIPAVQEAIKKETGKEAHKGVNPDEVVALGAAIQGGVITGDVKDVVLLDVTPLSLGIETMGGVFTKLIERNTTIPTSKSQVFSTAADNQTAVDIHVLQGERPMAADNKTLGRFQLTDIPPAPRGVPQIEVSFDIDKNGIVNVSAKDLGTGKEQNITIKSSSGLSDDEIERMVKEAEENAEADAKKKEEIELRNEADQLVFTTEKTLKDLEGKADEAQVKKANEAKDALKAAIEKNDLDEIKAKKDELQAIVQELSMKLYEEAAKQAQAQQDGGAGAKKADDNVVDAEYEEVNDDKDQK</sequence>
<comment type="function">
    <text evidence="1">Acts as a chaperone.</text>
</comment>
<comment type="induction">
    <text evidence="1">By stress conditions e.g. heat shock.</text>
</comment>
<comment type="similarity">
    <text evidence="1">Belongs to the heat shock protein 70 family.</text>
</comment>
<name>DNAK_BACLD</name>
<feature type="chain" id="PRO_0000225934" description="Chaperone protein DnaK">
    <location>
        <begin position="1"/>
        <end position="612"/>
    </location>
</feature>
<feature type="region of interest" description="Disordered" evidence="2">
    <location>
        <begin position="576"/>
        <end position="612"/>
    </location>
</feature>
<feature type="compositionally biased region" description="Acidic residues" evidence="2">
    <location>
        <begin position="596"/>
        <end position="612"/>
    </location>
</feature>
<feature type="modified residue" description="Phosphothreonine; by autocatalysis" evidence="1">
    <location>
        <position position="173"/>
    </location>
</feature>
<reference key="1">
    <citation type="journal article" date="2004" name="J. Mol. Microbiol. Biotechnol.">
        <title>The complete genome sequence of Bacillus licheniformis DSM13, an organism with great industrial potential.</title>
        <authorList>
            <person name="Veith B."/>
            <person name="Herzberg C."/>
            <person name="Steckel S."/>
            <person name="Feesche J."/>
            <person name="Maurer K.H."/>
            <person name="Ehrenreich P."/>
            <person name="Baeumer S."/>
            <person name="Henne A."/>
            <person name="Liesegang H."/>
            <person name="Merkl R."/>
            <person name="Ehrenreich A."/>
            <person name="Gottschalk G."/>
        </authorList>
    </citation>
    <scope>NUCLEOTIDE SEQUENCE [LARGE SCALE GENOMIC DNA]</scope>
    <source>
        <strain>ATCC 14580 / DSM 13 / JCM 2505 / CCUG 7422 / NBRC 12200 / NCIMB 9375 / NCTC 10341 / NRRL NRS-1264 / Gibson 46</strain>
    </source>
</reference>
<reference key="2">
    <citation type="journal article" date="2004" name="Genome Biol.">
        <title>Complete genome sequence of the industrial bacterium Bacillus licheniformis and comparisons with closely related Bacillus species.</title>
        <authorList>
            <person name="Rey M.W."/>
            <person name="Ramaiya P."/>
            <person name="Nelson B.A."/>
            <person name="Brody-Karpin S.D."/>
            <person name="Zaretsky E.J."/>
            <person name="Tang M."/>
            <person name="Lopez de Leon A."/>
            <person name="Xiang H."/>
            <person name="Gusti V."/>
            <person name="Clausen I.G."/>
            <person name="Olsen P.B."/>
            <person name="Rasmussen M.D."/>
            <person name="Andersen J.T."/>
            <person name="Joergensen P.L."/>
            <person name="Larsen T.S."/>
            <person name="Sorokin A."/>
            <person name="Bolotin A."/>
            <person name="Lapidus A."/>
            <person name="Galleron N."/>
            <person name="Ehrlich S.D."/>
            <person name="Berka R.M."/>
        </authorList>
    </citation>
    <scope>NUCLEOTIDE SEQUENCE [LARGE SCALE GENOMIC DNA]</scope>
    <source>
        <strain>ATCC 14580 / DSM 13 / JCM 2505 / CCUG 7422 / NBRC 12200 / NCIMB 9375 / NCTC 10341 / NRRL NRS-1264 / Gibson 46</strain>
    </source>
</reference>
<reference key="3">
    <citation type="submission" date="2007-04" db="EMBL/GenBank/DDBJ databases">
        <authorList>
            <person name="Berka R.M."/>
            <person name="Rey M.W."/>
            <person name="Ramaiya P."/>
        </authorList>
    </citation>
    <scope>SEQUENCE REVISION TO 610-612</scope>
</reference>
<keyword id="KW-0067">ATP-binding</keyword>
<keyword id="KW-0143">Chaperone</keyword>
<keyword id="KW-0547">Nucleotide-binding</keyword>
<keyword id="KW-0597">Phosphoprotein</keyword>
<keyword id="KW-1185">Reference proteome</keyword>
<keyword id="KW-0346">Stress response</keyword>
<proteinExistence type="inferred from homology"/>
<evidence type="ECO:0000255" key="1">
    <source>
        <dbReference type="HAMAP-Rule" id="MF_00332"/>
    </source>
</evidence>
<evidence type="ECO:0000256" key="2">
    <source>
        <dbReference type="SAM" id="MobiDB-lite"/>
    </source>
</evidence>
<protein>
    <recommendedName>
        <fullName evidence="1">Chaperone protein DnaK</fullName>
    </recommendedName>
    <alternativeName>
        <fullName evidence="1">HSP70</fullName>
    </alternativeName>
    <alternativeName>
        <fullName evidence="1">Heat shock 70 kDa protein</fullName>
    </alternativeName>
    <alternativeName>
        <fullName evidence="1">Heat shock protein 70</fullName>
    </alternativeName>
</protein>
<gene>
    <name evidence="1" type="primary">dnaK</name>
    <name type="ordered locus">BLi02739</name>
    <name type="ordered locus">BL02097</name>
</gene>
<dbReference type="EMBL" id="AE017333">
    <property type="protein sequence ID" value="AAU41610.1"/>
    <property type="molecule type" value="Genomic_DNA"/>
</dbReference>
<dbReference type="EMBL" id="CP000002">
    <property type="protein sequence ID" value="AAU24248.2"/>
    <property type="molecule type" value="Genomic_DNA"/>
</dbReference>
<dbReference type="RefSeq" id="WP_003183668.1">
    <property type="nucleotide sequence ID" value="NC_006322.1"/>
</dbReference>
<dbReference type="SMR" id="Q65H54"/>
<dbReference type="STRING" id="279010.BL02097"/>
<dbReference type="GeneID" id="92860670"/>
<dbReference type="KEGG" id="bld:BLi02739"/>
<dbReference type="KEGG" id="bli:BL02097"/>
<dbReference type="eggNOG" id="COG0443">
    <property type="taxonomic scope" value="Bacteria"/>
</dbReference>
<dbReference type="HOGENOM" id="CLU_005965_2_4_9"/>
<dbReference type="Proteomes" id="UP000000606">
    <property type="component" value="Chromosome"/>
</dbReference>
<dbReference type="GO" id="GO:0005524">
    <property type="term" value="F:ATP binding"/>
    <property type="evidence" value="ECO:0007669"/>
    <property type="project" value="UniProtKB-UniRule"/>
</dbReference>
<dbReference type="GO" id="GO:0140662">
    <property type="term" value="F:ATP-dependent protein folding chaperone"/>
    <property type="evidence" value="ECO:0007669"/>
    <property type="project" value="InterPro"/>
</dbReference>
<dbReference type="GO" id="GO:0051082">
    <property type="term" value="F:unfolded protein binding"/>
    <property type="evidence" value="ECO:0007669"/>
    <property type="project" value="InterPro"/>
</dbReference>
<dbReference type="CDD" id="cd10234">
    <property type="entry name" value="ASKHA_NBD_HSP70_DnaK-like"/>
    <property type="match status" value="1"/>
</dbReference>
<dbReference type="FunFam" id="2.60.34.10:FF:000014">
    <property type="entry name" value="Chaperone protein DnaK HSP70"/>
    <property type="match status" value="1"/>
</dbReference>
<dbReference type="FunFam" id="1.20.1270.10:FF:000004">
    <property type="entry name" value="Molecular chaperone DnaK"/>
    <property type="match status" value="1"/>
</dbReference>
<dbReference type="FunFam" id="3.30.420.40:FF:000071">
    <property type="entry name" value="Molecular chaperone DnaK"/>
    <property type="match status" value="1"/>
</dbReference>
<dbReference type="FunFam" id="3.90.640.10:FF:000003">
    <property type="entry name" value="Molecular chaperone DnaK"/>
    <property type="match status" value="1"/>
</dbReference>
<dbReference type="Gene3D" id="1.20.1270.10">
    <property type="match status" value="1"/>
</dbReference>
<dbReference type="Gene3D" id="3.30.420.40">
    <property type="match status" value="2"/>
</dbReference>
<dbReference type="Gene3D" id="3.90.640.10">
    <property type="entry name" value="Actin, Chain A, domain 4"/>
    <property type="match status" value="1"/>
</dbReference>
<dbReference type="Gene3D" id="2.60.34.10">
    <property type="entry name" value="Substrate Binding Domain Of DNAk, Chain A, domain 1"/>
    <property type="match status" value="1"/>
</dbReference>
<dbReference type="HAMAP" id="MF_00332">
    <property type="entry name" value="DnaK"/>
    <property type="match status" value="1"/>
</dbReference>
<dbReference type="InterPro" id="IPR043129">
    <property type="entry name" value="ATPase_NBD"/>
</dbReference>
<dbReference type="InterPro" id="IPR012725">
    <property type="entry name" value="Chaperone_DnaK"/>
</dbReference>
<dbReference type="InterPro" id="IPR018181">
    <property type="entry name" value="Heat_shock_70_CS"/>
</dbReference>
<dbReference type="InterPro" id="IPR029048">
    <property type="entry name" value="HSP70_C_sf"/>
</dbReference>
<dbReference type="InterPro" id="IPR029047">
    <property type="entry name" value="HSP70_peptide-bd_sf"/>
</dbReference>
<dbReference type="InterPro" id="IPR013126">
    <property type="entry name" value="Hsp_70_fam"/>
</dbReference>
<dbReference type="NCBIfam" id="NF001413">
    <property type="entry name" value="PRK00290.1"/>
    <property type="match status" value="1"/>
</dbReference>
<dbReference type="NCBIfam" id="TIGR02350">
    <property type="entry name" value="prok_dnaK"/>
    <property type="match status" value="1"/>
</dbReference>
<dbReference type="PANTHER" id="PTHR19375">
    <property type="entry name" value="HEAT SHOCK PROTEIN 70KDA"/>
    <property type="match status" value="1"/>
</dbReference>
<dbReference type="Pfam" id="PF00012">
    <property type="entry name" value="HSP70"/>
    <property type="match status" value="2"/>
</dbReference>
<dbReference type="PRINTS" id="PR00301">
    <property type="entry name" value="HEATSHOCK70"/>
</dbReference>
<dbReference type="SUPFAM" id="SSF53067">
    <property type="entry name" value="Actin-like ATPase domain"/>
    <property type="match status" value="2"/>
</dbReference>
<dbReference type="SUPFAM" id="SSF100934">
    <property type="entry name" value="Heat shock protein 70kD (HSP70), C-terminal subdomain"/>
    <property type="match status" value="1"/>
</dbReference>
<dbReference type="SUPFAM" id="SSF100920">
    <property type="entry name" value="Heat shock protein 70kD (HSP70), peptide-binding domain"/>
    <property type="match status" value="1"/>
</dbReference>
<dbReference type="PROSITE" id="PS00297">
    <property type="entry name" value="HSP70_1"/>
    <property type="match status" value="1"/>
</dbReference>
<dbReference type="PROSITE" id="PS00329">
    <property type="entry name" value="HSP70_2"/>
    <property type="match status" value="1"/>
</dbReference>
<dbReference type="PROSITE" id="PS01036">
    <property type="entry name" value="HSP70_3"/>
    <property type="match status" value="1"/>
</dbReference>
<organism>
    <name type="scientific">Bacillus licheniformis (strain ATCC 14580 / DSM 13 / JCM 2505 / CCUG 7422 / NBRC 12200 / NCIMB 9375 / NCTC 10341 / NRRL NRS-1264 / Gibson 46)</name>
    <dbReference type="NCBI Taxonomy" id="279010"/>
    <lineage>
        <taxon>Bacteria</taxon>
        <taxon>Bacillati</taxon>
        <taxon>Bacillota</taxon>
        <taxon>Bacilli</taxon>
        <taxon>Bacillales</taxon>
        <taxon>Bacillaceae</taxon>
        <taxon>Bacillus</taxon>
    </lineage>
</organism>
<accession>Q65H54</accession>
<accession>Q62SL1</accession>